<sequence length="401" mass="43758">MSKLVLILNCGSSSLKFAILDPATGEEKLSGLAEAFFLPEARIKWKLNGEKGNADLGAGAAHTEALNFIASNILNDELKNSIAAIGHRIVHGGEKYTQSVIVTDEVVKGIEDAAQFAPLHNPAHLIGIREAFKAFPHLKDKNVVVFDTAFHQTMPEEAFLYALPYSLYKEHGVRRYGAHGTSHYFVSREVAKYVGKPADQVNAIICHLGNGGSVSVVRNGQCIDTSMGLTPLEGLVMGTRCGDIDPAIVFYLYKTLGMSMDQIEETLVKKSGLLGLTEVTSDCRYAEDNYDDESKPETRRALNVYSYRLAKYIGAYMAVLGDDHLDAIAFTGGIGENSAHVRELALNHLKLFGIKIDNERNLATRFGKDGVITTDDSAFKAIVLPTNEELVIAQDTAKLCF</sequence>
<reference key="1">
    <citation type="journal article" date="1995" name="Science">
        <title>Whole-genome random sequencing and assembly of Haemophilus influenzae Rd.</title>
        <authorList>
            <person name="Fleischmann R.D."/>
            <person name="Adams M.D."/>
            <person name="White O."/>
            <person name="Clayton R.A."/>
            <person name="Kirkness E.F."/>
            <person name="Kerlavage A.R."/>
            <person name="Bult C.J."/>
            <person name="Tomb J.-F."/>
            <person name="Dougherty B.A."/>
            <person name="Merrick J.M."/>
            <person name="McKenney K."/>
            <person name="Sutton G.G."/>
            <person name="FitzHugh W."/>
            <person name="Fields C.A."/>
            <person name="Gocayne J.D."/>
            <person name="Scott J.D."/>
            <person name="Shirley R."/>
            <person name="Liu L.-I."/>
            <person name="Glodek A."/>
            <person name="Kelley J.M."/>
            <person name="Weidman J.F."/>
            <person name="Phillips C.A."/>
            <person name="Spriggs T."/>
            <person name="Hedblom E."/>
            <person name="Cotton M.D."/>
            <person name="Utterback T.R."/>
            <person name="Hanna M.C."/>
            <person name="Nguyen D.T."/>
            <person name="Saudek D.M."/>
            <person name="Brandon R.C."/>
            <person name="Fine L.D."/>
            <person name="Fritchman J.L."/>
            <person name="Fuhrmann J.L."/>
            <person name="Geoghagen N.S.M."/>
            <person name="Gnehm C.L."/>
            <person name="McDonald L.A."/>
            <person name="Small K.V."/>
            <person name="Fraser C.M."/>
            <person name="Smith H.O."/>
            <person name="Venter J.C."/>
        </authorList>
    </citation>
    <scope>NUCLEOTIDE SEQUENCE [LARGE SCALE GENOMIC DNA]</scope>
    <source>
        <strain>ATCC 51907 / DSM 11121 / KW20 / Rd</strain>
    </source>
</reference>
<feature type="chain" id="PRO_0000107565" description="Acetate kinase">
    <location>
        <begin position="1"/>
        <end position="401"/>
    </location>
</feature>
<feature type="active site" description="Proton donor/acceptor" evidence="1">
    <location>
        <position position="147"/>
    </location>
</feature>
<feature type="binding site" evidence="1">
    <location>
        <position position="9"/>
    </location>
    <ligand>
        <name>Mg(2+)</name>
        <dbReference type="ChEBI" id="CHEBI:18420"/>
    </ligand>
</feature>
<feature type="binding site" evidence="1">
    <location>
        <position position="16"/>
    </location>
    <ligand>
        <name>ATP</name>
        <dbReference type="ChEBI" id="CHEBI:30616"/>
    </ligand>
</feature>
<feature type="binding site" evidence="1">
    <location>
        <position position="88"/>
    </location>
    <ligand>
        <name>substrate</name>
    </ligand>
</feature>
<feature type="binding site" evidence="1">
    <location>
        <begin position="207"/>
        <end position="211"/>
    </location>
    <ligand>
        <name>ATP</name>
        <dbReference type="ChEBI" id="CHEBI:30616"/>
    </ligand>
</feature>
<feature type="binding site" evidence="1">
    <location>
        <begin position="282"/>
        <end position="284"/>
    </location>
    <ligand>
        <name>ATP</name>
        <dbReference type="ChEBI" id="CHEBI:30616"/>
    </ligand>
</feature>
<feature type="binding site" evidence="1">
    <location>
        <begin position="333"/>
        <end position="337"/>
    </location>
    <ligand>
        <name>ATP</name>
        <dbReference type="ChEBI" id="CHEBI:30616"/>
    </ligand>
</feature>
<feature type="binding site" evidence="1">
    <location>
        <position position="388"/>
    </location>
    <ligand>
        <name>Mg(2+)</name>
        <dbReference type="ChEBI" id="CHEBI:18420"/>
    </ligand>
</feature>
<feature type="site" description="Transition state stabilizer" evidence="1">
    <location>
        <position position="179"/>
    </location>
</feature>
<feature type="site" description="Transition state stabilizer" evidence="1">
    <location>
        <position position="240"/>
    </location>
</feature>
<dbReference type="EC" id="2.7.2.1" evidence="1"/>
<dbReference type="EMBL" id="L42023">
    <property type="protein sequence ID" value="AAC22858.1"/>
    <property type="molecule type" value="Genomic_DNA"/>
</dbReference>
<dbReference type="PIR" id="G64189">
    <property type="entry name" value="G64189"/>
</dbReference>
<dbReference type="RefSeq" id="NP_439360.1">
    <property type="nucleotide sequence ID" value="NC_000907.1"/>
</dbReference>
<dbReference type="SMR" id="P44406"/>
<dbReference type="STRING" id="71421.HI_1204"/>
<dbReference type="EnsemblBacteria" id="AAC22858">
    <property type="protein sequence ID" value="AAC22858"/>
    <property type="gene ID" value="HI_1204"/>
</dbReference>
<dbReference type="KEGG" id="hin:HI_1204"/>
<dbReference type="PATRIC" id="fig|71421.8.peg.1256"/>
<dbReference type="eggNOG" id="COG0282">
    <property type="taxonomic scope" value="Bacteria"/>
</dbReference>
<dbReference type="HOGENOM" id="CLU_020352_0_1_6"/>
<dbReference type="OrthoDB" id="9802453at2"/>
<dbReference type="PhylomeDB" id="P44406"/>
<dbReference type="BioCyc" id="HINF71421:G1GJ1-1235-MONOMER"/>
<dbReference type="UniPathway" id="UPA00340">
    <property type="reaction ID" value="UER00458"/>
</dbReference>
<dbReference type="Proteomes" id="UP000000579">
    <property type="component" value="Chromosome"/>
</dbReference>
<dbReference type="GO" id="GO:0005829">
    <property type="term" value="C:cytosol"/>
    <property type="evidence" value="ECO:0000318"/>
    <property type="project" value="GO_Central"/>
</dbReference>
<dbReference type="GO" id="GO:0008776">
    <property type="term" value="F:acetate kinase activity"/>
    <property type="evidence" value="ECO:0000318"/>
    <property type="project" value="GO_Central"/>
</dbReference>
<dbReference type="GO" id="GO:0005524">
    <property type="term" value="F:ATP binding"/>
    <property type="evidence" value="ECO:0007669"/>
    <property type="project" value="UniProtKB-KW"/>
</dbReference>
<dbReference type="GO" id="GO:0000287">
    <property type="term" value="F:magnesium ion binding"/>
    <property type="evidence" value="ECO:0007669"/>
    <property type="project" value="UniProtKB-UniRule"/>
</dbReference>
<dbReference type="GO" id="GO:0006083">
    <property type="term" value="P:acetate metabolic process"/>
    <property type="evidence" value="ECO:0000318"/>
    <property type="project" value="GO_Central"/>
</dbReference>
<dbReference type="GO" id="GO:0006085">
    <property type="term" value="P:acetyl-CoA biosynthetic process"/>
    <property type="evidence" value="ECO:0007669"/>
    <property type="project" value="UniProtKB-UniRule"/>
</dbReference>
<dbReference type="CDD" id="cd24010">
    <property type="entry name" value="ASKHA_NBD_AcK_PK"/>
    <property type="match status" value="1"/>
</dbReference>
<dbReference type="FunFam" id="3.30.420.40:FF:000041">
    <property type="entry name" value="Acetate kinase"/>
    <property type="match status" value="1"/>
</dbReference>
<dbReference type="FunFam" id="3.30.420.40:FF:000042">
    <property type="entry name" value="Acetate kinase"/>
    <property type="match status" value="1"/>
</dbReference>
<dbReference type="Gene3D" id="3.30.420.40">
    <property type="match status" value="2"/>
</dbReference>
<dbReference type="HAMAP" id="MF_00020">
    <property type="entry name" value="Acetate_kinase"/>
    <property type="match status" value="1"/>
</dbReference>
<dbReference type="InterPro" id="IPR004372">
    <property type="entry name" value="Ac/propionate_kinase"/>
</dbReference>
<dbReference type="InterPro" id="IPR000890">
    <property type="entry name" value="Aliphatic_acid_kin_short-chain"/>
</dbReference>
<dbReference type="InterPro" id="IPR023865">
    <property type="entry name" value="Aliphatic_acid_kinase_CS"/>
</dbReference>
<dbReference type="InterPro" id="IPR043129">
    <property type="entry name" value="ATPase_NBD"/>
</dbReference>
<dbReference type="NCBIfam" id="TIGR00016">
    <property type="entry name" value="ackA"/>
    <property type="match status" value="1"/>
</dbReference>
<dbReference type="PANTHER" id="PTHR21060">
    <property type="entry name" value="ACETATE KINASE"/>
    <property type="match status" value="1"/>
</dbReference>
<dbReference type="PANTHER" id="PTHR21060:SF21">
    <property type="entry name" value="ACETATE KINASE"/>
    <property type="match status" value="1"/>
</dbReference>
<dbReference type="Pfam" id="PF00871">
    <property type="entry name" value="Acetate_kinase"/>
    <property type="match status" value="1"/>
</dbReference>
<dbReference type="PIRSF" id="PIRSF000722">
    <property type="entry name" value="Acetate_prop_kin"/>
    <property type="match status" value="1"/>
</dbReference>
<dbReference type="PRINTS" id="PR00471">
    <property type="entry name" value="ACETATEKNASE"/>
</dbReference>
<dbReference type="SUPFAM" id="SSF53067">
    <property type="entry name" value="Actin-like ATPase domain"/>
    <property type="match status" value="2"/>
</dbReference>
<dbReference type="PROSITE" id="PS01075">
    <property type="entry name" value="ACETATE_KINASE_1"/>
    <property type="match status" value="1"/>
</dbReference>
<dbReference type="PROSITE" id="PS01076">
    <property type="entry name" value="ACETATE_KINASE_2"/>
    <property type="match status" value="1"/>
</dbReference>
<gene>
    <name evidence="1" type="primary">ackA</name>
    <name type="ordered locus">HI_1204</name>
</gene>
<accession>P44406</accession>
<proteinExistence type="inferred from homology"/>
<keyword id="KW-0067">ATP-binding</keyword>
<keyword id="KW-0963">Cytoplasm</keyword>
<keyword id="KW-0418">Kinase</keyword>
<keyword id="KW-0460">Magnesium</keyword>
<keyword id="KW-0479">Metal-binding</keyword>
<keyword id="KW-0547">Nucleotide-binding</keyword>
<keyword id="KW-1185">Reference proteome</keyword>
<keyword id="KW-0808">Transferase</keyword>
<protein>
    <recommendedName>
        <fullName evidence="1">Acetate kinase</fullName>
        <ecNumber evidence="1">2.7.2.1</ecNumber>
    </recommendedName>
    <alternativeName>
        <fullName evidence="1">Acetokinase</fullName>
    </alternativeName>
</protein>
<comment type="function">
    <text evidence="1">Catalyzes the formation of acetyl phosphate from acetate and ATP. Can also catalyze the reverse reaction.</text>
</comment>
<comment type="catalytic activity">
    <reaction evidence="1">
        <text>acetate + ATP = acetyl phosphate + ADP</text>
        <dbReference type="Rhea" id="RHEA:11352"/>
        <dbReference type="ChEBI" id="CHEBI:22191"/>
        <dbReference type="ChEBI" id="CHEBI:30089"/>
        <dbReference type="ChEBI" id="CHEBI:30616"/>
        <dbReference type="ChEBI" id="CHEBI:456216"/>
        <dbReference type="EC" id="2.7.2.1"/>
    </reaction>
</comment>
<comment type="cofactor">
    <cofactor evidence="1">
        <name>Mg(2+)</name>
        <dbReference type="ChEBI" id="CHEBI:18420"/>
    </cofactor>
    <cofactor evidence="1">
        <name>Mn(2+)</name>
        <dbReference type="ChEBI" id="CHEBI:29035"/>
    </cofactor>
    <text evidence="1">Mg(2+). Can also accept Mn(2+).</text>
</comment>
<comment type="pathway">
    <text evidence="1">Metabolic intermediate biosynthesis; acetyl-CoA biosynthesis; acetyl-CoA from acetate: step 1/2.</text>
</comment>
<comment type="subunit">
    <text evidence="1">Homodimer.</text>
</comment>
<comment type="subcellular location">
    <subcellularLocation>
        <location>Cytoplasm</location>
    </subcellularLocation>
</comment>
<comment type="similarity">
    <text evidence="1">Belongs to the acetokinase family.</text>
</comment>
<evidence type="ECO:0000255" key="1">
    <source>
        <dbReference type="HAMAP-Rule" id="MF_00020"/>
    </source>
</evidence>
<organism>
    <name type="scientific">Haemophilus influenzae (strain ATCC 51907 / DSM 11121 / KW20 / Rd)</name>
    <dbReference type="NCBI Taxonomy" id="71421"/>
    <lineage>
        <taxon>Bacteria</taxon>
        <taxon>Pseudomonadati</taxon>
        <taxon>Pseudomonadota</taxon>
        <taxon>Gammaproteobacteria</taxon>
        <taxon>Pasteurellales</taxon>
        <taxon>Pasteurellaceae</taxon>
        <taxon>Haemophilus</taxon>
    </lineage>
</organism>
<name>ACKA_HAEIN</name>